<accession>Q15NP1</accession>
<reference key="1">
    <citation type="submission" date="2006-06" db="EMBL/GenBank/DDBJ databases">
        <title>Complete sequence of Pseudoalteromonas atlantica T6c.</title>
        <authorList>
            <consortium name="US DOE Joint Genome Institute"/>
            <person name="Copeland A."/>
            <person name="Lucas S."/>
            <person name="Lapidus A."/>
            <person name="Barry K."/>
            <person name="Detter J.C."/>
            <person name="Glavina del Rio T."/>
            <person name="Hammon N."/>
            <person name="Israni S."/>
            <person name="Dalin E."/>
            <person name="Tice H."/>
            <person name="Pitluck S."/>
            <person name="Saunders E."/>
            <person name="Brettin T."/>
            <person name="Bruce D."/>
            <person name="Han C."/>
            <person name="Tapia R."/>
            <person name="Gilna P."/>
            <person name="Schmutz J."/>
            <person name="Larimer F."/>
            <person name="Land M."/>
            <person name="Hauser L."/>
            <person name="Kyrpides N."/>
            <person name="Kim E."/>
            <person name="Karls A.C."/>
            <person name="Bartlett D."/>
            <person name="Higgins B.P."/>
            <person name="Richardson P."/>
        </authorList>
    </citation>
    <scope>NUCLEOTIDE SEQUENCE [LARGE SCALE GENOMIC DNA]</scope>
    <source>
        <strain>T6c / ATCC BAA-1087</strain>
    </source>
</reference>
<name>COAX_PSEA6</name>
<comment type="function">
    <text evidence="1">Catalyzes the phosphorylation of pantothenate (Pan), the first step in CoA biosynthesis.</text>
</comment>
<comment type="catalytic activity">
    <reaction evidence="1">
        <text>(R)-pantothenate + ATP = (R)-4'-phosphopantothenate + ADP + H(+)</text>
        <dbReference type="Rhea" id="RHEA:16373"/>
        <dbReference type="ChEBI" id="CHEBI:10986"/>
        <dbReference type="ChEBI" id="CHEBI:15378"/>
        <dbReference type="ChEBI" id="CHEBI:29032"/>
        <dbReference type="ChEBI" id="CHEBI:30616"/>
        <dbReference type="ChEBI" id="CHEBI:456216"/>
        <dbReference type="EC" id="2.7.1.33"/>
    </reaction>
</comment>
<comment type="cofactor">
    <cofactor evidence="1">
        <name>NH4(+)</name>
        <dbReference type="ChEBI" id="CHEBI:28938"/>
    </cofactor>
    <cofactor evidence="1">
        <name>K(+)</name>
        <dbReference type="ChEBI" id="CHEBI:29103"/>
    </cofactor>
    <text evidence="1">A monovalent cation. Ammonium or potassium.</text>
</comment>
<comment type="pathway">
    <text evidence="1">Cofactor biosynthesis; coenzyme A biosynthesis; CoA from (R)-pantothenate: step 1/5.</text>
</comment>
<comment type="subunit">
    <text evidence="1">Homodimer.</text>
</comment>
<comment type="subcellular location">
    <subcellularLocation>
        <location evidence="1">Cytoplasm</location>
    </subcellularLocation>
</comment>
<comment type="similarity">
    <text evidence="1">Belongs to the type III pantothenate kinase family.</text>
</comment>
<gene>
    <name evidence="1" type="primary">coaX</name>
    <name type="ordered locus">Patl_3997</name>
</gene>
<protein>
    <recommendedName>
        <fullName evidence="1">Type III pantothenate kinase</fullName>
        <ecNumber evidence="1">2.7.1.33</ecNumber>
    </recommendedName>
    <alternativeName>
        <fullName evidence="1">PanK-III</fullName>
    </alternativeName>
    <alternativeName>
        <fullName evidence="1">Pantothenic acid kinase</fullName>
    </alternativeName>
</protein>
<keyword id="KW-0067">ATP-binding</keyword>
<keyword id="KW-0173">Coenzyme A biosynthesis</keyword>
<keyword id="KW-0963">Cytoplasm</keyword>
<keyword id="KW-0418">Kinase</keyword>
<keyword id="KW-0479">Metal-binding</keyword>
<keyword id="KW-0547">Nucleotide-binding</keyword>
<keyword id="KW-0630">Potassium</keyword>
<keyword id="KW-0808">Transferase</keyword>
<sequence length="246" mass="27208">MSEQANALLLDIGNSFIKSAHVKISERVFEQPLIVTRCNEVSKLREQIKASQRVVAAAVGQGQQVKLLESLCAELHVPLILAKSQAQAFSMRCAYRNFSTLGVDRWLAVIAARRISNTDAYCVIDLGTANTCDVVIGHQHLGGWIAPGFSLMRDSLIKNTELVFANDDFPNDLTLGEQTVDCVNMGCAAAVNGFIYAAEQKMRERKSEYTVIITGGGQELIKKNAPKHYYFHKNLVLLGLLEYLFT</sequence>
<evidence type="ECO:0000255" key="1">
    <source>
        <dbReference type="HAMAP-Rule" id="MF_01274"/>
    </source>
</evidence>
<organism>
    <name type="scientific">Pseudoalteromonas atlantica (strain T6c / ATCC BAA-1087)</name>
    <dbReference type="NCBI Taxonomy" id="3042615"/>
    <lineage>
        <taxon>Bacteria</taxon>
        <taxon>Pseudomonadati</taxon>
        <taxon>Pseudomonadota</taxon>
        <taxon>Gammaproteobacteria</taxon>
        <taxon>Alteromonadales</taxon>
        <taxon>Alteromonadaceae</taxon>
        <taxon>Paraglaciecola</taxon>
    </lineage>
</organism>
<dbReference type="EC" id="2.7.1.33" evidence="1"/>
<dbReference type="EMBL" id="CP000388">
    <property type="protein sequence ID" value="ABG42497.1"/>
    <property type="molecule type" value="Genomic_DNA"/>
</dbReference>
<dbReference type="RefSeq" id="WP_011576697.1">
    <property type="nucleotide sequence ID" value="NC_008228.1"/>
</dbReference>
<dbReference type="SMR" id="Q15NP1"/>
<dbReference type="STRING" id="342610.Patl_3997"/>
<dbReference type="KEGG" id="pat:Patl_3997"/>
<dbReference type="eggNOG" id="COG1521">
    <property type="taxonomic scope" value="Bacteria"/>
</dbReference>
<dbReference type="HOGENOM" id="CLU_066627_0_1_6"/>
<dbReference type="OrthoDB" id="9781305at2"/>
<dbReference type="UniPathway" id="UPA00241">
    <property type="reaction ID" value="UER00352"/>
</dbReference>
<dbReference type="Proteomes" id="UP000001981">
    <property type="component" value="Chromosome"/>
</dbReference>
<dbReference type="GO" id="GO:0005737">
    <property type="term" value="C:cytoplasm"/>
    <property type="evidence" value="ECO:0007669"/>
    <property type="project" value="UniProtKB-SubCell"/>
</dbReference>
<dbReference type="GO" id="GO:0005524">
    <property type="term" value="F:ATP binding"/>
    <property type="evidence" value="ECO:0007669"/>
    <property type="project" value="UniProtKB-UniRule"/>
</dbReference>
<dbReference type="GO" id="GO:0046872">
    <property type="term" value="F:metal ion binding"/>
    <property type="evidence" value="ECO:0007669"/>
    <property type="project" value="UniProtKB-KW"/>
</dbReference>
<dbReference type="GO" id="GO:0004594">
    <property type="term" value="F:pantothenate kinase activity"/>
    <property type="evidence" value="ECO:0007669"/>
    <property type="project" value="UniProtKB-UniRule"/>
</dbReference>
<dbReference type="GO" id="GO:0015937">
    <property type="term" value="P:coenzyme A biosynthetic process"/>
    <property type="evidence" value="ECO:0007669"/>
    <property type="project" value="UniProtKB-UniRule"/>
</dbReference>
<dbReference type="CDD" id="cd24015">
    <property type="entry name" value="ASKHA_NBD_PanK-III"/>
    <property type="match status" value="1"/>
</dbReference>
<dbReference type="Gene3D" id="3.30.420.40">
    <property type="match status" value="2"/>
</dbReference>
<dbReference type="HAMAP" id="MF_01274">
    <property type="entry name" value="Pantothen_kinase_3"/>
    <property type="match status" value="1"/>
</dbReference>
<dbReference type="InterPro" id="IPR043129">
    <property type="entry name" value="ATPase_NBD"/>
</dbReference>
<dbReference type="InterPro" id="IPR004619">
    <property type="entry name" value="Type_III_PanK"/>
</dbReference>
<dbReference type="NCBIfam" id="TIGR00671">
    <property type="entry name" value="baf"/>
    <property type="match status" value="1"/>
</dbReference>
<dbReference type="PANTHER" id="PTHR34265">
    <property type="entry name" value="TYPE III PANTOTHENATE KINASE"/>
    <property type="match status" value="1"/>
</dbReference>
<dbReference type="PANTHER" id="PTHR34265:SF1">
    <property type="entry name" value="TYPE III PANTOTHENATE KINASE"/>
    <property type="match status" value="1"/>
</dbReference>
<dbReference type="Pfam" id="PF03309">
    <property type="entry name" value="Pan_kinase"/>
    <property type="match status" value="1"/>
</dbReference>
<dbReference type="SUPFAM" id="SSF53067">
    <property type="entry name" value="Actin-like ATPase domain"/>
    <property type="match status" value="2"/>
</dbReference>
<proteinExistence type="inferred from homology"/>
<feature type="chain" id="PRO_0000270890" description="Type III pantothenate kinase">
    <location>
        <begin position="1"/>
        <end position="246"/>
    </location>
</feature>
<feature type="active site" description="Proton acceptor" evidence="1">
    <location>
        <position position="104"/>
    </location>
</feature>
<feature type="binding site" evidence="1">
    <location>
        <begin position="11"/>
        <end position="18"/>
    </location>
    <ligand>
        <name>ATP</name>
        <dbReference type="ChEBI" id="CHEBI:30616"/>
    </ligand>
</feature>
<feature type="binding site" evidence="1">
    <location>
        <position position="95"/>
    </location>
    <ligand>
        <name>substrate</name>
    </ligand>
</feature>
<feature type="binding site" evidence="1">
    <location>
        <begin position="102"/>
        <end position="105"/>
    </location>
    <ligand>
        <name>substrate</name>
    </ligand>
</feature>
<feature type="binding site" evidence="1">
    <location>
        <position position="125"/>
    </location>
    <ligand>
        <name>K(+)</name>
        <dbReference type="ChEBI" id="CHEBI:29103"/>
    </ligand>
</feature>
<feature type="binding site" evidence="1">
    <location>
        <position position="128"/>
    </location>
    <ligand>
        <name>ATP</name>
        <dbReference type="ChEBI" id="CHEBI:30616"/>
    </ligand>
</feature>
<feature type="binding site" evidence="1">
    <location>
        <position position="179"/>
    </location>
    <ligand>
        <name>substrate</name>
    </ligand>
</feature>